<accession>A5F475</accession>
<accession>C3M335</accession>
<sequence>MNMNATLLGQAISFGMFVWFCMKYVWPPIIKAIEDRQKKIADGLQAAERAKKDLDLAQANASDQLKEAKRTATELIEQANKRKAQIIDEAREEAQAERQKILTQAEAEIEAERNRARDELRKQVATLAIAGAEKILERSIDKDTHKDILDNITAKL</sequence>
<keyword id="KW-0066">ATP synthesis</keyword>
<keyword id="KW-0997">Cell inner membrane</keyword>
<keyword id="KW-1003">Cell membrane</keyword>
<keyword id="KW-0138">CF(0)</keyword>
<keyword id="KW-0375">Hydrogen ion transport</keyword>
<keyword id="KW-0406">Ion transport</keyword>
<keyword id="KW-0472">Membrane</keyword>
<keyword id="KW-0812">Transmembrane</keyword>
<keyword id="KW-1133">Transmembrane helix</keyword>
<keyword id="KW-0813">Transport</keyword>
<protein>
    <recommendedName>
        <fullName evidence="1">ATP synthase subunit b</fullName>
    </recommendedName>
    <alternativeName>
        <fullName evidence="1">ATP synthase F(0) sector subunit b</fullName>
    </alternativeName>
    <alternativeName>
        <fullName evidence="1">ATPase subunit I</fullName>
    </alternativeName>
    <alternativeName>
        <fullName evidence="1">F-type ATPase subunit b</fullName>
        <shortName evidence="1">F-ATPase subunit b</shortName>
    </alternativeName>
</protein>
<dbReference type="EMBL" id="CP000627">
    <property type="protein sequence ID" value="ABQ20572.1"/>
    <property type="molecule type" value="Genomic_DNA"/>
</dbReference>
<dbReference type="EMBL" id="CP001235">
    <property type="protein sequence ID" value="ACP08214.1"/>
    <property type="molecule type" value="Genomic_DNA"/>
</dbReference>
<dbReference type="RefSeq" id="WP_001884340.1">
    <property type="nucleotide sequence ID" value="NZ_JAACZH010000018.1"/>
</dbReference>
<dbReference type="SMR" id="A5F475"/>
<dbReference type="KEGG" id="vco:VC0395_A2524"/>
<dbReference type="KEGG" id="vcr:VC395_0187"/>
<dbReference type="PATRIC" id="fig|345073.21.peg.176"/>
<dbReference type="eggNOG" id="COG0711">
    <property type="taxonomic scope" value="Bacteria"/>
</dbReference>
<dbReference type="HOGENOM" id="CLU_079215_4_5_6"/>
<dbReference type="OrthoDB" id="9788020at2"/>
<dbReference type="Proteomes" id="UP000000249">
    <property type="component" value="Chromosome 2"/>
</dbReference>
<dbReference type="GO" id="GO:0005886">
    <property type="term" value="C:plasma membrane"/>
    <property type="evidence" value="ECO:0007669"/>
    <property type="project" value="UniProtKB-SubCell"/>
</dbReference>
<dbReference type="GO" id="GO:0045259">
    <property type="term" value="C:proton-transporting ATP synthase complex"/>
    <property type="evidence" value="ECO:0007669"/>
    <property type="project" value="UniProtKB-KW"/>
</dbReference>
<dbReference type="GO" id="GO:0046933">
    <property type="term" value="F:proton-transporting ATP synthase activity, rotational mechanism"/>
    <property type="evidence" value="ECO:0007669"/>
    <property type="project" value="UniProtKB-UniRule"/>
</dbReference>
<dbReference type="GO" id="GO:0046961">
    <property type="term" value="F:proton-transporting ATPase activity, rotational mechanism"/>
    <property type="evidence" value="ECO:0007669"/>
    <property type="project" value="TreeGrafter"/>
</dbReference>
<dbReference type="CDD" id="cd06503">
    <property type="entry name" value="ATP-synt_Fo_b"/>
    <property type="match status" value="1"/>
</dbReference>
<dbReference type="FunFam" id="1.20.5.620:FF:000001">
    <property type="entry name" value="ATP synthase subunit b"/>
    <property type="match status" value="1"/>
</dbReference>
<dbReference type="Gene3D" id="1.20.5.620">
    <property type="entry name" value="F1F0 ATP synthase subunit B, membrane domain"/>
    <property type="match status" value="1"/>
</dbReference>
<dbReference type="HAMAP" id="MF_01398">
    <property type="entry name" value="ATP_synth_b_bprime"/>
    <property type="match status" value="1"/>
</dbReference>
<dbReference type="InterPro" id="IPR028987">
    <property type="entry name" value="ATP_synth_B-like_membr_sf"/>
</dbReference>
<dbReference type="InterPro" id="IPR002146">
    <property type="entry name" value="ATP_synth_b/b'su_bac/chlpt"/>
</dbReference>
<dbReference type="InterPro" id="IPR005864">
    <property type="entry name" value="ATP_synth_F0_bsu_bac"/>
</dbReference>
<dbReference type="InterPro" id="IPR050059">
    <property type="entry name" value="ATP_synthase_B_chain"/>
</dbReference>
<dbReference type="NCBIfam" id="TIGR01144">
    <property type="entry name" value="ATP_synt_b"/>
    <property type="match status" value="1"/>
</dbReference>
<dbReference type="NCBIfam" id="NF004411">
    <property type="entry name" value="PRK05759.1-2"/>
    <property type="match status" value="1"/>
</dbReference>
<dbReference type="NCBIfam" id="NF004413">
    <property type="entry name" value="PRK05759.1-4"/>
    <property type="match status" value="1"/>
</dbReference>
<dbReference type="PANTHER" id="PTHR33445:SF1">
    <property type="entry name" value="ATP SYNTHASE SUBUNIT B"/>
    <property type="match status" value="1"/>
</dbReference>
<dbReference type="PANTHER" id="PTHR33445">
    <property type="entry name" value="ATP SYNTHASE SUBUNIT B', CHLOROPLASTIC"/>
    <property type="match status" value="1"/>
</dbReference>
<dbReference type="Pfam" id="PF00430">
    <property type="entry name" value="ATP-synt_B"/>
    <property type="match status" value="1"/>
</dbReference>
<dbReference type="SUPFAM" id="SSF81573">
    <property type="entry name" value="F1F0 ATP synthase subunit B, membrane domain"/>
    <property type="match status" value="1"/>
</dbReference>
<name>ATPF_VIBC3</name>
<reference key="1">
    <citation type="submission" date="2007-03" db="EMBL/GenBank/DDBJ databases">
        <authorList>
            <person name="Heidelberg J."/>
        </authorList>
    </citation>
    <scope>NUCLEOTIDE SEQUENCE [LARGE SCALE GENOMIC DNA]</scope>
    <source>
        <strain>ATCC 39541 / Classical Ogawa 395 / O395</strain>
    </source>
</reference>
<reference key="2">
    <citation type="journal article" date="2008" name="PLoS ONE">
        <title>A recalibrated molecular clock and independent origins for the cholera pandemic clones.</title>
        <authorList>
            <person name="Feng L."/>
            <person name="Reeves P.R."/>
            <person name="Lan R."/>
            <person name="Ren Y."/>
            <person name="Gao C."/>
            <person name="Zhou Z."/>
            <person name="Ren Y."/>
            <person name="Cheng J."/>
            <person name="Wang W."/>
            <person name="Wang J."/>
            <person name="Qian W."/>
            <person name="Li D."/>
            <person name="Wang L."/>
        </authorList>
    </citation>
    <scope>NUCLEOTIDE SEQUENCE [LARGE SCALE GENOMIC DNA]</scope>
    <source>
        <strain>ATCC 39541 / Classical Ogawa 395 / O395</strain>
    </source>
</reference>
<gene>
    <name evidence="1" type="primary">atpF</name>
    <name type="ordered locus">VC0395_A2524</name>
    <name type="ordered locus">VC395_0187</name>
</gene>
<organism>
    <name type="scientific">Vibrio cholerae serotype O1 (strain ATCC 39541 / Classical Ogawa 395 / O395)</name>
    <dbReference type="NCBI Taxonomy" id="345073"/>
    <lineage>
        <taxon>Bacteria</taxon>
        <taxon>Pseudomonadati</taxon>
        <taxon>Pseudomonadota</taxon>
        <taxon>Gammaproteobacteria</taxon>
        <taxon>Vibrionales</taxon>
        <taxon>Vibrionaceae</taxon>
        <taxon>Vibrio</taxon>
    </lineage>
</organism>
<proteinExistence type="inferred from homology"/>
<evidence type="ECO:0000255" key="1">
    <source>
        <dbReference type="HAMAP-Rule" id="MF_01398"/>
    </source>
</evidence>
<feature type="chain" id="PRO_0000368856" description="ATP synthase subunit b">
    <location>
        <begin position="1"/>
        <end position="156"/>
    </location>
</feature>
<feature type="transmembrane region" description="Helical" evidence="1">
    <location>
        <begin position="7"/>
        <end position="29"/>
    </location>
</feature>
<comment type="function">
    <text evidence="1">F(1)F(0) ATP synthase produces ATP from ADP in the presence of a proton or sodium gradient. F-type ATPases consist of two structural domains, F(1) containing the extramembraneous catalytic core and F(0) containing the membrane proton channel, linked together by a central stalk and a peripheral stalk. During catalysis, ATP synthesis in the catalytic domain of F(1) is coupled via a rotary mechanism of the central stalk subunits to proton translocation.</text>
</comment>
<comment type="function">
    <text evidence="1">Component of the F(0) channel, it forms part of the peripheral stalk, linking F(1) to F(0).</text>
</comment>
<comment type="subunit">
    <text evidence="1">F-type ATPases have 2 components, F(1) - the catalytic core - and F(0) - the membrane proton channel. F(1) has five subunits: alpha(3), beta(3), gamma(1), delta(1), epsilon(1). F(0) has three main subunits: a(1), b(2) and c(10-14). The alpha and beta chains form an alternating ring which encloses part of the gamma chain. F(1) is attached to F(0) by a central stalk formed by the gamma and epsilon chains, while a peripheral stalk is formed by the delta and b chains.</text>
</comment>
<comment type="subcellular location">
    <subcellularLocation>
        <location evidence="1">Cell inner membrane</location>
        <topology evidence="1">Single-pass membrane protein</topology>
    </subcellularLocation>
</comment>
<comment type="similarity">
    <text evidence="1">Belongs to the ATPase B chain family.</text>
</comment>